<reference key="1">
    <citation type="patent" date="2002-10-22" number="JP2002534996">
        <title>Alpha-conotoxin peptides.</title>
        <authorList>
            <person name="Watkins M."/>
            <person name="Olivera B.M."/>
            <person name="Hillyard D.R."/>
            <person name="Mcintosh M.J."/>
            <person name="Jones R.M."/>
        </authorList>
    </citation>
    <scope>NUCLEOTIDE SEQUENCE</scope>
</reference>
<reference key="2">
    <citation type="journal article" date="1998" name="J. Biol. Chem.">
        <title>Alpha-conotoxin EpI, a novel sulfated peptide from Conus episcopatus that selectively targets neuronal nicotinic acetylcholine receptors.</title>
        <authorList>
            <person name="Loughnan M."/>
            <person name="Bond T."/>
            <person name="Atkins A."/>
            <person name="Cuevas J."/>
            <person name="Adams D.J."/>
            <person name="Broxton N.M."/>
            <person name="Livett B.G."/>
            <person name="Down J.G."/>
            <person name="Jones A."/>
            <person name="Alewood P.F."/>
            <person name="Lewis R.J."/>
        </authorList>
    </citation>
    <scope>PROTEIN SEQUENCE OF 40-55</scope>
    <scope>FUNCTION</scope>
    <scope>SYNTHESIS OF 40-55</scope>
    <scope>DISULFIDE BONDS</scope>
    <scope>SULFATION AT TYR-54</scope>
    <scope>AMIDATION AT CYS-55</scope>
    <scope>MASS SPECTROMETRY</scope>
    <scope>SUBCELLULAR LOCATION</scope>
</reference>
<reference evidence="10" key="3">
    <citation type="journal article" date="1998" name="Biochemistry">
        <title>The 1.1-A resolution crystal structure of [Tyr15]EpI, a novel alpha-conotoxin from Conus episcopatus, solved by direct methods.</title>
        <authorList>
            <person name="Hu S.H."/>
            <person name="Loughnan M."/>
            <person name="Miller R."/>
            <person name="Weeks C.M."/>
            <person name="Blessing R.H."/>
            <person name="Alewood P.F."/>
            <person name="Lewis R.J."/>
            <person name="Martin J.L."/>
        </authorList>
    </citation>
    <scope>X-RAY CRYSTALLOGRAPHY (1.1 ANGSTROMS) OF 40-55 (NON-SULFATED)</scope>
    <scope>AMIDATION AT CYS-55</scope>
    <scope>DISULFIDE BONDS</scope>
</reference>
<reference evidence="11 12 13" key="4">
    <citation type="journal article" date="2021" name="RSC Med. Chem.">
        <title>Posttranslational modifications of alpha-conotoxins: sulfotyrosine and C-terminal amidation stabilise structures and increase acetylcholine receptor binding.</title>
        <authorList>
            <person name="Ho T.N.T."/>
            <person name="Lee H.S."/>
            <person name="Swaminathan S."/>
            <person name="Goodwin L."/>
            <person name="Rai N."/>
            <person name="Ushay B."/>
            <person name="Lewis R.J."/>
            <person name="Rosengren K.J."/>
            <person name="Conibear A.C."/>
        </authorList>
    </citation>
    <scope>STRUCTURE BY NMR OF 40-55 (SULFATED AND NON-SULFATED CONOTOXIN)</scope>
    <scope>SYNTHESIS OF 40-55 (SULFATED; NON-SULFATED; AMIDATED AND NON-AMIDATED CONOTOXIN)</scope>
    <scope>PTM</scope>
</reference>
<proteinExistence type="evidence at protein level"/>
<evidence type="ECO:0000250" key="1">
    <source>
        <dbReference type="UniProtKB" id="P56636"/>
    </source>
</evidence>
<evidence type="ECO:0000255" key="2"/>
<evidence type="ECO:0000269" key="3">
    <source>
    </source>
</evidence>
<evidence type="ECO:0000269" key="4">
    <source>
    </source>
</evidence>
<evidence type="ECO:0000269" key="5">
    <source>
    </source>
</evidence>
<evidence type="ECO:0000303" key="6">
    <source>
    </source>
</evidence>
<evidence type="ECO:0000303" key="7">
    <source>
    </source>
</evidence>
<evidence type="ECO:0000305" key="8"/>
<evidence type="ECO:0000305" key="9">
    <source>
    </source>
</evidence>
<evidence type="ECO:0007744" key="10">
    <source>
        <dbReference type="PDB" id="1A0M"/>
    </source>
</evidence>
<evidence type="ECO:0007744" key="11">
    <source>
        <dbReference type="PDB" id="7N0T"/>
    </source>
</evidence>
<evidence type="ECO:0007744" key="12">
    <source>
        <dbReference type="PDB" id="7N24"/>
    </source>
</evidence>
<evidence type="ECO:0007744" key="13">
    <source>
        <dbReference type="PDB" id="7N26"/>
    </source>
</evidence>
<evidence type="ECO:0007829" key="14">
    <source>
        <dbReference type="PDB" id="1A0M"/>
    </source>
</evidence>
<accession>P56638</accession>
<sequence>MFTVFLLVVLATTVVSFTSDRASDSRKDAASGLIALTIKGCCSDPRCNMNNPDYCG</sequence>
<dbReference type="EMBL" id="BD261428">
    <property type="status" value="NOT_ANNOTATED_CDS"/>
    <property type="molecule type" value="Unassigned_DNA"/>
</dbReference>
<dbReference type="PIR" id="A59042">
    <property type="entry name" value="A59042"/>
</dbReference>
<dbReference type="PDB" id="1A0M">
    <property type="method" value="X-ray"/>
    <property type="resolution" value="1.10 A"/>
    <property type="chains" value="A/B=40-55"/>
</dbReference>
<dbReference type="PDB" id="7N0T">
    <property type="method" value="NMR"/>
    <property type="chains" value="A=40-55"/>
</dbReference>
<dbReference type="PDB" id="7N24">
    <property type="method" value="NMR"/>
    <property type="chains" value="A=40-55"/>
</dbReference>
<dbReference type="PDB" id="7N25">
    <property type="method" value="NMR"/>
    <property type="chains" value="A=40-55"/>
</dbReference>
<dbReference type="PDB" id="7N26">
    <property type="method" value="NMR"/>
    <property type="chains" value="A=40-55"/>
</dbReference>
<dbReference type="PDBsum" id="1A0M"/>
<dbReference type="PDBsum" id="7N0T"/>
<dbReference type="PDBsum" id="7N24"/>
<dbReference type="PDBsum" id="7N25"/>
<dbReference type="PDBsum" id="7N26"/>
<dbReference type="SMR" id="P56638"/>
<dbReference type="ConoServer" id="405">
    <property type="toxin name" value="EpI"/>
</dbReference>
<dbReference type="EvolutionaryTrace" id="P56638"/>
<dbReference type="GO" id="GO:0005576">
    <property type="term" value="C:extracellular region"/>
    <property type="evidence" value="ECO:0007669"/>
    <property type="project" value="UniProtKB-SubCell"/>
</dbReference>
<dbReference type="GO" id="GO:0035792">
    <property type="term" value="C:host cell postsynaptic membrane"/>
    <property type="evidence" value="ECO:0007669"/>
    <property type="project" value="UniProtKB-KW"/>
</dbReference>
<dbReference type="GO" id="GO:0030550">
    <property type="term" value="F:acetylcholine receptor inhibitor activity"/>
    <property type="evidence" value="ECO:0007669"/>
    <property type="project" value="UniProtKB-KW"/>
</dbReference>
<dbReference type="GO" id="GO:0099106">
    <property type="term" value="F:ion channel regulator activity"/>
    <property type="evidence" value="ECO:0007669"/>
    <property type="project" value="UniProtKB-KW"/>
</dbReference>
<dbReference type="GO" id="GO:0090729">
    <property type="term" value="F:toxin activity"/>
    <property type="evidence" value="ECO:0007669"/>
    <property type="project" value="UniProtKB-KW"/>
</dbReference>
<dbReference type="InterPro" id="IPR009958">
    <property type="entry name" value="Conotoxin_a-typ"/>
</dbReference>
<dbReference type="InterPro" id="IPR018072">
    <property type="entry name" value="Conotoxin_a-typ_CS"/>
</dbReference>
<dbReference type="Pfam" id="PF07365">
    <property type="entry name" value="Toxin_8"/>
    <property type="match status" value="1"/>
</dbReference>
<dbReference type="PROSITE" id="PS60014">
    <property type="entry name" value="ALPHA_CONOTOXIN"/>
    <property type="match status" value="1"/>
</dbReference>
<name>CA1A_CONEP</name>
<keyword id="KW-0002">3D-structure</keyword>
<keyword id="KW-0008">Acetylcholine receptor inhibiting toxin</keyword>
<keyword id="KW-0027">Amidation</keyword>
<keyword id="KW-0903">Direct protein sequencing</keyword>
<keyword id="KW-1015">Disulfide bond</keyword>
<keyword id="KW-0872">Ion channel impairing toxin</keyword>
<keyword id="KW-0528">Neurotoxin</keyword>
<keyword id="KW-0629">Postsynaptic neurotoxin</keyword>
<keyword id="KW-0964">Secreted</keyword>
<keyword id="KW-0732">Signal</keyword>
<keyword id="KW-0765">Sulfation</keyword>
<keyword id="KW-0800">Toxin</keyword>
<comment type="function">
    <text evidence="4">Alpha-conotoxins act on postsynaptic membranes, they bind to the nicotinic acetylcholine receptors (nAChR) and thus inhibit them. This native peptide blocks mammalian nicotinic acetylcholine receptors composed of alpha-3-beta-2/CHRNA3-CHRNB2 and alpha-3-beta-4/CHRNA3-CHRNB4 subunits (PubMed:9624161).</text>
</comment>
<comment type="subcellular location">
    <subcellularLocation>
        <location evidence="4">Secreted</location>
    </subcellularLocation>
</comment>
<comment type="tissue specificity">
    <text evidence="9">Expressed by the venom duct.</text>
</comment>
<comment type="domain">
    <text evidence="8">The cysteine framework is I (CC-C-C). Alpha4/7 pattern.</text>
</comment>
<comment type="PTM">
    <text evidence="3">Both tyrosine sulfation and C-terminal amidation are important for activity and structure stability.</text>
</comment>
<comment type="mass spectrometry">
    <text>With sulfation.</text>
</comment>
<comment type="miscellaneous">
    <text evidence="4">Does not show activity on alpha-7/CHRNA7 nAChR.</text>
</comment>
<comment type="similarity">
    <text evidence="8">Belongs to the conotoxin A superfamily.</text>
</comment>
<organism>
    <name type="scientific">Conus episcopatus</name>
    <name type="common">Bishop's cone</name>
    <dbReference type="NCBI Taxonomy" id="88764"/>
    <lineage>
        <taxon>Eukaryota</taxon>
        <taxon>Metazoa</taxon>
        <taxon>Spiralia</taxon>
        <taxon>Lophotrochozoa</taxon>
        <taxon>Mollusca</taxon>
        <taxon>Gastropoda</taxon>
        <taxon>Caenogastropoda</taxon>
        <taxon>Neogastropoda</taxon>
        <taxon>Conoidea</taxon>
        <taxon>Conidae</taxon>
        <taxon>Conus</taxon>
        <taxon>Darioconus</taxon>
    </lineage>
</organism>
<protein>
    <recommendedName>
        <fullName evidence="6 7">Alpha-conotoxin EpI</fullName>
    </recommendedName>
</protein>
<feature type="signal peptide" evidence="2">
    <location>
        <begin position="1"/>
        <end position="16"/>
    </location>
</feature>
<feature type="propeptide" id="PRO_0000392692" evidence="4">
    <location>
        <begin position="17"/>
        <end position="39"/>
    </location>
</feature>
<feature type="peptide" id="PRO_0000044457" description="Alpha-conotoxin EpI" evidence="4">
    <location>
        <begin position="40"/>
        <end position="55"/>
    </location>
</feature>
<feature type="region of interest" description="Ser-Xaa-Pro motif, crucial for potent interaction with nAChR" evidence="1">
    <location>
        <begin position="43"/>
        <end position="45"/>
    </location>
</feature>
<feature type="modified residue" description="Sulfotyrosine" evidence="4">
    <location>
        <position position="54"/>
    </location>
</feature>
<feature type="modified residue" description="Cysteine amide" evidence="4 5">
    <location>
        <position position="55"/>
    </location>
</feature>
<feature type="disulfide bond" evidence="5 10">
    <location>
        <begin position="41"/>
        <end position="47"/>
    </location>
</feature>
<feature type="disulfide bond" evidence="5 10">
    <location>
        <begin position="42"/>
        <end position="55"/>
    </location>
</feature>
<feature type="helix" evidence="14">
    <location>
        <begin position="41"/>
        <end position="43"/>
    </location>
</feature>
<feature type="helix" evidence="14">
    <location>
        <begin position="45"/>
        <end position="50"/>
    </location>
</feature>
<feature type="turn" evidence="14">
    <location>
        <begin position="52"/>
        <end position="54"/>
    </location>
</feature>